<keyword id="KW-0012">Acyltransferase</keyword>
<keyword id="KW-0963">Cytoplasm</keyword>
<keyword id="KW-0408">Iron</keyword>
<keyword id="KW-0479">Metal-binding</keyword>
<keyword id="KW-0808">Transferase</keyword>
<keyword id="KW-0819">tRNA processing</keyword>
<sequence>MIGMGIETSCDETSIGIIRDGKELLSLGIFSQIDLHKPYGGIVPEIASRAHLEKINLLLEETMEEAKIRFEDLSYVAVTSSPGLTGSLMVGAQMARCINMVYETPILPVCHLQSHFAVLHLEGVPTEFPVLGLLLSGGNSAVYILQEFGRMELVGDTMDDALGEAFDKVAGLLDLPYPGGPHIEAKANEYIPTPDEKPILPLLLRNLPQGEVSFSFSGLKTAVMVLLEKQKEVSKEQICWNFQNSAFDLVERNLKRAVAKTGIRKVFAAGGVLANTTLQKRLEVWAGKNSVELFTPKKKIYCTDNGAMVASLGYHLFRKGYKKGVDFTVNPSRQEIFS</sequence>
<organism>
    <name type="scientific">Leptospira borgpetersenii serovar Hardjo-bovis (strain JB197)</name>
    <dbReference type="NCBI Taxonomy" id="355277"/>
    <lineage>
        <taxon>Bacteria</taxon>
        <taxon>Pseudomonadati</taxon>
        <taxon>Spirochaetota</taxon>
        <taxon>Spirochaetia</taxon>
        <taxon>Leptospirales</taxon>
        <taxon>Leptospiraceae</taxon>
        <taxon>Leptospira</taxon>
    </lineage>
</organism>
<evidence type="ECO:0000255" key="1">
    <source>
        <dbReference type="HAMAP-Rule" id="MF_01445"/>
    </source>
</evidence>
<feature type="chain" id="PRO_0000303407" description="tRNA N6-adenosine threonylcarbamoyltransferase">
    <location>
        <begin position="1"/>
        <end position="338"/>
    </location>
</feature>
<feature type="binding site" evidence="1">
    <location>
        <position position="111"/>
    </location>
    <ligand>
        <name>Fe cation</name>
        <dbReference type="ChEBI" id="CHEBI:24875"/>
    </ligand>
</feature>
<feature type="binding site" evidence="1">
    <location>
        <position position="115"/>
    </location>
    <ligand>
        <name>Fe cation</name>
        <dbReference type="ChEBI" id="CHEBI:24875"/>
    </ligand>
</feature>
<feature type="binding site" evidence="1">
    <location>
        <begin position="134"/>
        <end position="138"/>
    </location>
    <ligand>
        <name>substrate</name>
    </ligand>
</feature>
<feature type="binding site" evidence="1">
    <location>
        <position position="167"/>
    </location>
    <ligand>
        <name>substrate</name>
    </ligand>
</feature>
<feature type="binding site" evidence="1">
    <location>
        <position position="180"/>
    </location>
    <ligand>
        <name>substrate</name>
    </ligand>
</feature>
<feature type="binding site" evidence="1">
    <location>
        <position position="275"/>
    </location>
    <ligand>
        <name>substrate</name>
    </ligand>
</feature>
<feature type="binding site" evidence="1">
    <location>
        <position position="304"/>
    </location>
    <ligand>
        <name>Fe cation</name>
        <dbReference type="ChEBI" id="CHEBI:24875"/>
    </ligand>
</feature>
<name>TSAD_LEPBJ</name>
<accession>Q04RH4</accession>
<reference key="1">
    <citation type="journal article" date="2006" name="Proc. Natl. Acad. Sci. U.S.A.">
        <title>Genome reduction in Leptospira borgpetersenii reflects limited transmission potential.</title>
        <authorList>
            <person name="Bulach D.M."/>
            <person name="Zuerner R.L."/>
            <person name="Wilson P."/>
            <person name="Seemann T."/>
            <person name="McGrath A."/>
            <person name="Cullen P.A."/>
            <person name="Davis J."/>
            <person name="Johnson M."/>
            <person name="Kuczek E."/>
            <person name="Alt D.P."/>
            <person name="Peterson-Burch B."/>
            <person name="Coppel R.L."/>
            <person name="Rood J.I."/>
            <person name="Davies J.K."/>
            <person name="Adler B."/>
        </authorList>
    </citation>
    <scope>NUCLEOTIDE SEQUENCE [LARGE SCALE GENOMIC DNA]</scope>
    <source>
        <strain>JB197</strain>
    </source>
</reference>
<proteinExistence type="inferred from homology"/>
<comment type="function">
    <text evidence="1">Required for the formation of a threonylcarbamoyl group on adenosine at position 37 (t(6)A37) in tRNAs that read codons beginning with adenine. Is involved in the transfer of the threonylcarbamoyl moiety of threonylcarbamoyl-AMP (TC-AMP) to the N6 group of A37, together with TsaE and TsaB. TsaD likely plays a direct catalytic role in this reaction.</text>
</comment>
<comment type="catalytic activity">
    <reaction evidence="1">
        <text>L-threonylcarbamoyladenylate + adenosine(37) in tRNA = N(6)-L-threonylcarbamoyladenosine(37) in tRNA + AMP + H(+)</text>
        <dbReference type="Rhea" id="RHEA:37059"/>
        <dbReference type="Rhea" id="RHEA-COMP:10162"/>
        <dbReference type="Rhea" id="RHEA-COMP:10163"/>
        <dbReference type="ChEBI" id="CHEBI:15378"/>
        <dbReference type="ChEBI" id="CHEBI:73682"/>
        <dbReference type="ChEBI" id="CHEBI:74411"/>
        <dbReference type="ChEBI" id="CHEBI:74418"/>
        <dbReference type="ChEBI" id="CHEBI:456215"/>
        <dbReference type="EC" id="2.3.1.234"/>
    </reaction>
</comment>
<comment type="cofactor">
    <cofactor evidence="1">
        <name>Fe(2+)</name>
        <dbReference type="ChEBI" id="CHEBI:29033"/>
    </cofactor>
    <text evidence="1">Binds 1 Fe(2+) ion per subunit.</text>
</comment>
<comment type="subcellular location">
    <subcellularLocation>
        <location evidence="1">Cytoplasm</location>
    </subcellularLocation>
</comment>
<comment type="similarity">
    <text evidence="1">Belongs to the KAE1 / TsaD family.</text>
</comment>
<protein>
    <recommendedName>
        <fullName evidence="1">tRNA N6-adenosine threonylcarbamoyltransferase</fullName>
        <ecNumber evidence="1">2.3.1.234</ecNumber>
    </recommendedName>
    <alternativeName>
        <fullName evidence="1">N6-L-threonylcarbamoyladenine synthase</fullName>
        <shortName evidence="1">t(6)A synthase</shortName>
    </alternativeName>
    <alternativeName>
        <fullName evidence="1">t(6)A37 threonylcarbamoyladenosine biosynthesis protein TsaD</fullName>
    </alternativeName>
    <alternativeName>
        <fullName evidence="1">tRNA threonylcarbamoyladenosine biosynthesis protein TsaD</fullName>
    </alternativeName>
</protein>
<dbReference type="EC" id="2.3.1.234" evidence="1"/>
<dbReference type="EMBL" id="CP000350">
    <property type="protein sequence ID" value="ABJ76496.1"/>
    <property type="molecule type" value="Genomic_DNA"/>
</dbReference>
<dbReference type="RefSeq" id="WP_011669858.1">
    <property type="nucleotide sequence ID" value="NC_008510.1"/>
</dbReference>
<dbReference type="SMR" id="Q04RH4"/>
<dbReference type="KEGG" id="lbj:LBJ_1982"/>
<dbReference type="HOGENOM" id="CLU_023208_0_2_12"/>
<dbReference type="Proteomes" id="UP000000656">
    <property type="component" value="Chromosome 1"/>
</dbReference>
<dbReference type="GO" id="GO:0005737">
    <property type="term" value="C:cytoplasm"/>
    <property type="evidence" value="ECO:0007669"/>
    <property type="project" value="UniProtKB-SubCell"/>
</dbReference>
<dbReference type="GO" id="GO:0005506">
    <property type="term" value="F:iron ion binding"/>
    <property type="evidence" value="ECO:0007669"/>
    <property type="project" value="UniProtKB-UniRule"/>
</dbReference>
<dbReference type="GO" id="GO:0061711">
    <property type="term" value="F:N(6)-L-threonylcarbamoyladenine synthase activity"/>
    <property type="evidence" value="ECO:0007669"/>
    <property type="project" value="UniProtKB-EC"/>
</dbReference>
<dbReference type="GO" id="GO:0002949">
    <property type="term" value="P:tRNA threonylcarbamoyladenosine modification"/>
    <property type="evidence" value="ECO:0007669"/>
    <property type="project" value="UniProtKB-UniRule"/>
</dbReference>
<dbReference type="FunFam" id="3.30.420.40:FF:000012">
    <property type="entry name" value="tRNA N6-adenosine threonylcarbamoyltransferase"/>
    <property type="match status" value="1"/>
</dbReference>
<dbReference type="Gene3D" id="3.30.420.40">
    <property type="match status" value="2"/>
</dbReference>
<dbReference type="HAMAP" id="MF_01445">
    <property type="entry name" value="TsaD"/>
    <property type="match status" value="1"/>
</dbReference>
<dbReference type="InterPro" id="IPR043129">
    <property type="entry name" value="ATPase_NBD"/>
</dbReference>
<dbReference type="InterPro" id="IPR000905">
    <property type="entry name" value="Gcp-like_dom"/>
</dbReference>
<dbReference type="InterPro" id="IPR017861">
    <property type="entry name" value="KAE1/TsaD"/>
</dbReference>
<dbReference type="InterPro" id="IPR022450">
    <property type="entry name" value="TsaD"/>
</dbReference>
<dbReference type="NCBIfam" id="TIGR00329">
    <property type="entry name" value="gcp_kae1"/>
    <property type="match status" value="1"/>
</dbReference>
<dbReference type="NCBIfam" id="TIGR03723">
    <property type="entry name" value="T6A_TsaD_YgjD"/>
    <property type="match status" value="1"/>
</dbReference>
<dbReference type="PANTHER" id="PTHR11735">
    <property type="entry name" value="TRNA N6-ADENOSINE THREONYLCARBAMOYLTRANSFERASE"/>
    <property type="match status" value="1"/>
</dbReference>
<dbReference type="PANTHER" id="PTHR11735:SF6">
    <property type="entry name" value="TRNA N6-ADENOSINE THREONYLCARBAMOYLTRANSFERASE, MITOCHONDRIAL"/>
    <property type="match status" value="1"/>
</dbReference>
<dbReference type="Pfam" id="PF00814">
    <property type="entry name" value="TsaD"/>
    <property type="match status" value="1"/>
</dbReference>
<dbReference type="PRINTS" id="PR00789">
    <property type="entry name" value="OSIALOPTASE"/>
</dbReference>
<dbReference type="SUPFAM" id="SSF53067">
    <property type="entry name" value="Actin-like ATPase domain"/>
    <property type="match status" value="1"/>
</dbReference>
<gene>
    <name evidence="1" type="primary">tsaD</name>
    <name type="synonym">gcp</name>
    <name type="ordered locus">LBJ_1982</name>
</gene>